<organism>
    <name type="scientific">Malassezia globosa (strain ATCC MYA-4612 / CBS 7966)</name>
    <name type="common">Dandruff-associated fungus</name>
    <dbReference type="NCBI Taxonomy" id="425265"/>
    <lineage>
        <taxon>Eukaryota</taxon>
        <taxon>Fungi</taxon>
        <taxon>Dikarya</taxon>
        <taxon>Basidiomycota</taxon>
        <taxon>Ustilaginomycotina</taxon>
        <taxon>Malasseziomycetes</taxon>
        <taxon>Malasseziales</taxon>
        <taxon>Malasseziaceae</taxon>
        <taxon>Malassezia</taxon>
    </lineage>
</organism>
<dbReference type="EC" id="3.1.1.-" evidence="6"/>
<dbReference type="EMBL" id="AAYY01000002">
    <property type="protein sequence ID" value="EDP44993.1"/>
    <property type="molecule type" value="Genomic_DNA"/>
</dbReference>
<dbReference type="RefSeq" id="XP_001732207.1">
    <property type="nucleotide sequence ID" value="XM_001732155.1"/>
</dbReference>
<dbReference type="SMR" id="A8PUY7"/>
<dbReference type="GeneID" id="5856513"/>
<dbReference type="KEGG" id="mgl:MGL_0800"/>
<dbReference type="VEuPathDB" id="FungiDB:MGL_0800"/>
<dbReference type="InParanoid" id="A8PUY7"/>
<dbReference type="OMA" id="YICSKER"/>
<dbReference type="OrthoDB" id="426718at2759"/>
<dbReference type="Proteomes" id="UP000008837">
    <property type="component" value="Unassembled WGS sequence"/>
</dbReference>
<dbReference type="GO" id="GO:0005576">
    <property type="term" value="C:extracellular region"/>
    <property type="evidence" value="ECO:0007669"/>
    <property type="project" value="UniProtKB-SubCell"/>
</dbReference>
<dbReference type="GO" id="GO:0016787">
    <property type="term" value="F:hydrolase activity"/>
    <property type="evidence" value="ECO:0007669"/>
    <property type="project" value="UniProtKB-KW"/>
</dbReference>
<dbReference type="GO" id="GO:0016042">
    <property type="term" value="P:lipid catabolic process"/>
    <property type="evidence" value="ECO:0007669"/>
    <property type="project" value="UniProtKB-KW"/>
</dbReference>
<dbReference type="CDD" id="cd00519">
    <property type="entry name" value="Lipase_3"/>
    <property type="match status" value="1"/>
</dbReference>
<dbReference type="Gene3D" id="3.40.50.1820">
    <property type="entry name" value="alpha/beta hydrolase"/>
    <property type="match status" value="1"/>
</dbReference>
<dbReference type="InterPro" id="IPR029058">
    <property type="entry name" value="AB_hydrolase_fold"/>
</dbReference>
<dbReference type="InterPro" id="IPR002921">
    <property type="entry name" value="Fungal_lipase-type"/>
</dbReference>
<dbReference type="InterPro" id="IPR051218">
    <property type="entry name" value="Sec_MonoDiacylglyc_Lipase"/>
</dbReference>
<dbReference type="PANTHER" id="PTHR45856">
    <property type="entry name" value="ALPHA/BETA-HYDROLASES SUPERFAMILY PROTEIN"/>
    <property type="match status" value="1"/>
</dbReference>
<dbReference type="PANTHER" id="PTHR45856:SF24">
    <property type="entry name" value="FUNGAL LIPASE-LIKE DOMAIN-CONTAINING PROTEIN"/>
    <property type="match status" value="1"/>
</dbReference>
<dbReference type="Pfam" id="PF01764">
    <property type="entry name" value="Lipase_3"/>
    <property type="match status" value="1"/>
</dbReference>
<dbReference type="SUPFAM" id="SSF53474">
    <property type="entry name" value="alpha/beta-Hydrolases"/>
    <property type="match status" value="1"/>
</dbReference>
<dbReference type="PROSITE" id="PS00120">
    <property type="entry name" value="LIPASE_SER"/>
    <property type="match status" value="1"/>
</dbReference>
<keyword id="KW-0134">Cell wall</keyword>
<keyword id="KW-1015">Disulfide bond</keyword>
<keyword id="KW-0325">Glycoprotein</keyword>
<keyword id="KW-0378">Hydrolase</keyword>
<keyword id="KW-0442">Lipid degradation</keyword>
<keyword id="KW-0443">Lipid metabolism</keyword>
<keyword id="KW-1185">Reference proteome</keyword>
<keyword id="KW-0964">Secreted</keyword>
<keyword id="KW-0732">Signal</keyword>
<keyword id="KW-0843">Virulence</keyword>
<name>MDL4_MALGO</name>
<accession>A8PUY7</accession>
<reference key="1">
    <citation type="journal article" date="2007" name="Proc. Natl. Acad. Sci. U.S.A.">
        <title>Dandruff-associated Malassezia genomes reveal convergent and divergent virulence traits shared with plant and human fungal pathogens.</title>
        <authorList>
            <person name="Xu J."/>
            <person name="Saunders C.W."/>
            <person name="Hu P."/>
            <person name="Grant R.A."/>
            <person name="Boekhout T."/>
            <person name="Kuramae E.E."/>
            <person name="Kronstad J.W."/>
            <person name="DeAngelis Y.M."/>
            <person name="Reeder N.L."/>
            <person name="Johnstone K.R."/>
            <person name="Leland M."/>
            <person name="Fieno A.M."/>
            <person name="Begley W.M."/>
            <person name="Sun Y."/>
            <person name="Lacey M.P."/>
            <person name="Chaudhary T."/>
            <person name="Keough T."/>
            <person name="Chu L."/>
            <person name="Sears R."/>
            <person name="Yuan B."/>
            <person name="Dawson T.L. Jr."/>
        </authorList>
    </citation>
    <scope>NUCLEOTIDE SEQUENCE [LARGE SCALE GENOMIC DNA]</scope>
    <scope>IDENTIFICATION</scope>
    <scope>FUNCTION</scope>
    <source>
        <strain>ATCC MYA-4612 / CBS 7966</strain>
    </source>
</reference>
<reference key="2">
    <citation type="journal article" date="2016" name="Microbiology">
        <title>Secreted lipases from Malassezia globosa: recombinant expression and determination of their substrate specificities.</title>
        <authorList>
            <person name="Sommer B."/>
            <person name="Overy D.P."/>
            <person name="Haltli B."/>
            <person name="Kerr R.G."/>
        </authorList>
    </citation>
    <scope>FUNCTION</scope>
    <scope>CATALYTIC ACTIVITY</scope>
    <scope>SUBSTRATE SPECIFICITY</scope>
</reference>
<sequence length="304" mass="33863">MRFGGVVSLVLGFIVSVLAGPLHPRAASSTQQPVDVTYKIEPFTQAAGLVQQTYCSPSSYEPGLQLGDATFLWRIGDGDQRQRVNLYHSESLGIAVAIQGTNGSSTRSILNDFQYNPFDPDERYSQYYPKGAKIMNGFQIAYVKLVDDIFRALKKYKREKNESRVTVIGHSQGAAIGLLAAMDIELRLDGGLFRSYLFGLPRVGNPTFASFVDRTIGHKLRWAINGRDWVPTVPIHIYGYQHPSNYIWIYPGNSTNWKLYPGQENVHGIPTVPRVFNNNDHQGIYFHTQIGGVDGECPARVGAH</sequence>
<protein>
    <recommendedName>
        <fullName evidence="7">Secreted mono- and diacylglycerol lipase MDL4</fullName>
        <ecNumber evidence="6">3.1.1.-</ecNumber>
    </recommendedName>
</protein>
<gene>
    <name evidence="7" type="primary">MDL4</name>
    <name type="ORF">MGL_0800</name>
</gene>
<feature type="signal peptide" evidence="2">
    <location>
        <begin position="1"/>
        <end position="19"/>
    </location>
</feature>
<feature type="chain" id="PRO_5002724993" description="Secreted mono- and diacylglycerol lipase MDL4">
    <location>
        <begin position="20"/>
        <end position="304"/>
    </location>
</feature>
<feature type="active site" description="Nucleophile" evidence="4">
    <location>
        <position position="171"/>
    </location>
</feature>
<feature type="active site" evidence="1">
    <location>
        <position position="228"/>
    </location>
</feature>
<feature type="active site" evidence="1">
    <location>
        <position position="281"/>
    </location>
</feature>
<feature type="glycosylation site" description="N-linked (GlcNAc...) asparagine" evidence="3">
    <location>
        <position position="102"/>
    </location>
</feature>
<feature type="glycosylation site" description="N-linked (GlcNAc...) asparagine" evidence="3">
    <location>
        <position position="161"/>
    </location>
</feature>
<feature type="glycosylation site" description="N-linked (GlcNAc...) asparagine" evidence="3">
    <location>
        <position position="253"/>
    </location>
</feature>
<feature type="disulfide bond" evidence="1">
    <location>
        <begin position="55"/>
        <end position="297"/>
    </location>
</feature>
<evidence type="ECO:0000250" key="1">
    <source>
        <dbReference type="UniProtKB" id="A8PUY1"/>
    </source>
</evidence>
<evidence type="ECO:0000255" key="2"/>
<evidence type="ECO:0000255" key="3">
    <source>
        <dbReference type="PROSITE-ProRule" id="PRU00498"/>
    </source>
</evidence>
<evidence type="ECO:0000255" key="4">
    <source>
        <dbReference type="PROSITE-ProRule" id="PRU10037"/>
    </source>
</evidence>
<evidence type="ECO:0000269" key="5">
    <source>
    </source>
</evidence>
<evidence type="ECO:0000269" key="6">
    <source>
    </source>
</evidence>
<evidence type="ECO:0000303" key="7">
    <source>
    </source>
</evidence>
<evidence type="ECO:0000305" key="8"/>
<proteinExistence type="evidence at protein level"/>
<comment type="function">
    <text evidence="5 6">Secreted lipase involved in Dandruff and seborrheic dermatitis (D/SD) probably via lipase-mediated breakdown of sebaceous lipids and release of irritating free fatty acids (PubMed:18000048). Shows activity against monoglyceride and diglyceride substrates, but not triglyceride substrates and does not exhibit regio-selective production of diacylglycerols (PubMed:27130210). Cleaves oleic acid from 1,2 isomers of diolein on both the 1 and the 2 position of the glycerol backbone, resulting mainly in free fatty acids but no monoolein is detected (PubMed:27130210). Shows activity on monoolein and liberates mostly free fatty acids, but can also perform the reverse reaction and produce diolein (PubMed:27130210).</text>
</comment>
<comment type="catalytic activity">
    <reaction evidence="6">
        <text>a monoacylglycerol + H2O = glycerol + a fatty acid + H(+)</text>
        <dbReference type="Rhea" id="RHEA:15245"/>
        <dbReference type="ChEBI" id="CHEBI:15377"/>
        <dbReference type="ChEBI" id="CHEBI:15378"/>
        <dbReference type="ChEBI" id="CHEBI:17408"/>
        <dbReference type="ChEBI" id="CHEBI:17754"/>
        <dbReference type="ChEBI" id="CHEBI:28868"/>
    </reaction>
</comment>
<comment type="catalytic activity">
    <reaction evidence="6">
        <text>a diacylglycerol + H2O = a monoacylglycerol + a fatty acid + H(+)</text>
        <dbReference type="Rhea" id="RHEA:32731"/>
        <dbReference type="ChEBI" id="CHEBI:15377"/>
        <dbReference type="ChEBI" id="CHEBI:15378"/>
        <dbReference type="ChEBI" id="CHEBI:17408"/>
        <dbReference type="ChEBI" id="CHEBI:18035"/>
        <dbReference type="ChEBI" id="CHEBI:28868"/>
    </reaction>
</comment>
<comment type="subcellular location">
    <subcellularLocation>
        <location evidence="5">Secreted</location>
    </subcellularLocation>
    <subcellularLocation>
        <location evidence="5">Secreted</location>
        <location evidence="5">Cell wall</location>
    </subcellularLocation>
</comment>
<comment type="similarity">
    <text evidence="8">Belongs to the AB hydrolase superfamily. Lipase family. Class 3 subfamily.</text>
</comment>